<organism>
    <name type="scientific">Methanosarcina acetivorans (strain ATCC 35395 / DSM 2834 / JCM 12185 / C2A)</name>
    <dbReference type="NCBI Taxonomy" id="188937"/>
    <lineage>
        <taxon>Archaea</taxon>
        <taxon>Methanobacteriati</taxon>
        <taxon>Methanobacteriota</taxon>
        <taxon>Stenosarchaea group</taxon>
        <taxon>Methanomicrobia</taxon>
        <taxon>Methanosarcinales</taxon>
        <taxon>Methanosarcinaceae</taxon>
        <taxon>Methanosarcina</taxon>
    </lineage>
</organism>
<dbReference type="EC" id="7.-.-.-"/>
<dbReference type="EMBL" id="AE010299">
    <property type="protein sequence ID" value="AAM05154.1"/>
    <property type="molecule type" value="Genomic_DNA"/>
</dbReference>
<dbReference type="RefSeq" id="WP_011021751.1">
    <property type="nucleotide sequence ID" value="NC_003552.1"/>
</dbReference>
<dbReference type="SMR" id="Q8TQ05"/>
<dbReference type="STRING" id="188937.MA_1747"/>
<dbReference type="EnsemblBacteria" id="AAM05154">
    <property type="protein sequence ID" value="AAM05154"/>
    <property type="gene ID" value="MA_1747"/>
</dbReference>
<dbReference type="GeneID" id="1473635"/>
<dbReference type="KEGG" id="mac:MA_1747"/>
<dbReference type="HOGENOM" id="CLU_000604_86_7_2"/>
<dbReference type="InParanoid" id="Q8TQ05"/>
<dbReference type="OrthoDB" id="35850at2157"/>
<dbReference type="PhylomeDB" id="Q8TQ05"/>
<dbReference type="Proteomes" id="UP000002487">
    <property type="component" value="Chromosome"/>
</dbReference>
<dbReference type="GO" id="GO:0043190">
    <property type="term" value="C:ATP-binding cassette (ABC) transporter complex"/>
    <property type="evidence" value="ECO:0000318"/>
    <property type="project" value="GO_Central"/>
</dbReference>
<dbReference type="GO" id="GO:0005524">
    <property type="term" value="F:ATP binding"/>
    <property type="evidence" value="ECO:0000318"/>
    <property type="project" value="GO_Central"/>
</dbReference>
<dbReference type="GO" id="GO:0016887">
    <property type="term" value="F:ATP hydrolysis activity"/>
    <property type="evidence" value="ECO:0007669"/>
    <property type="project" value="InterPro"/>
</dbReference>
<dbReference type="GO" id="GO:0042626">
    <property type="term" value="F:ATPase-coupled transmembrane transporter activity"/>
    <property type="evidence" value="ECO:0000318"/>
    <property type="project" value="GO_Central"/>
</dbReference>
<dbReference type="CDD" id="cd03225">
    <property type="entry name" value="ABC_cobalt_CbiO_domain1"/>
    <property type="match status" value="2"/>
</dbReference>
<dbReference type="FunFam" id="3.40.50.300:FF:000224">
    <property type="entry name" value="Energy-coupling factor transporter ATP-binding protein EcfA"/>
    <property type="match status" value="2"/>
</dbReference>
<dbReference type="Gene3D" id="3.40.50.300">
    <property type="entry name" value="P-loop containing nucleotide triphosphate hydrolases"/>
    <property type="match status" value="2"/>
</dbReference>
<dbReference type="InterPro" id="IPR003593">
    <property type="entry name" value="AAA+_ATPase"/>
</dbReference>
<dbReference type="InterPro" id="IPR003439">
    <property type="entry name" value="ABC_transporter-like_ATP-bd"/>
</dbReference>
<dbReference type="InterPro" id="IPR015856">
    <property type="entry name" value="ABC_transpr_CbiO/EcfA_su"/>
</dbReference>
<dbReference type="InterPro" id="IPR050095">
    <property type="entry name" value="ECF_ABC_transporter_ATP-bd"/>
</dbReference>
<dbReference type="InterPro" id="IPR027417">
    <property type="entry name" value="P-loop_NTPase"/>
</dbReference>
<dbReference type="NCBIfam" id="NF010167">
    <property type="entry name" value="PRK13648.1"/>
    <property type="match status" value="2"/>
</dbReference>
<dbReference type="PANTHER" id="PTHR43553:SF24">
    <property type="entry name" value="ENERGY-COUPLING FACTOR TRANSPORTER ATP-BINDING PROTEIN ECFA1"/>
    <property type="match status" value="1"/>
</dbReference>
<dbReference type="PANTHER" id="PTHR43553">
    <property type="entry name" value="HEAVY METAL TRANSPORTER"/>
    <property type="match status" value="1"/>
</dbReference>
<dbReference type="Pfam" id="PF00005">
    <property type="entry name" value="ABC_tran"/>
    <property type="match status" value="2"/>
</dbReference>
<dbReference type="SMART" id="SM00382">
    <property type="entry name" value="AAA"/>
    <property type="match status" value="2"/>
</dbReference>
<dbReference type="SUPFAM" id="SSF52540">
    <property type="entry name" value="P-loop containing nucleoside triphosphate hydrolases"/>
    <property type="match status" value="2"/>
</dbReference>
<dbReference type="PROSITE" id="PS50893">
    <property type="entry name" value="ABC_TRANSPORTER_2"/>
    <property type="match status" value="2"/>
</dbReference>
<reference key="1">
    <citation type="journal article" date="2002" name="Genome Res.">
        <title>The genome of Methanosarcina acetivorans reveals extensive metabolic and physiological diversity.</title>
        <authorList>
            <person name="Galagan J.E."/>
            <person name="Nusbaum C."/>
            <person name="Roy A."/>
            <person name="Endrizzi M.G."/>
            <person name="Macdonald P."/>
            <person name="FitzHugh W."/>
            <person name="Calvo S."/>
            <person name="Engels R."/>
            <person name="Smirnov S."/>
            <person name="Atnoor D."/>
            <person name="Brown A."/>
            <person name="Allen N."/>
            <person name="Naylor J."/>
            <person name="Stange-Thomann N."/>
            <person name="DeArellano K."/>
            <person name="Johnson R."/>
            <person name="Linton L."/>
            <person name="McEwan P."/>
            <person name="McKernan K."/>
            <person name="Talamas J."/>
            <person name="Tirrell A."/>
            <person name="Ye W."/>
            <person name="Zimmer A."/>
            <person name="Barber R.D."/>
            <person name="Cann I."/>
            <person name="Graham D.E."/>
            <person name="Grahame D.A."/>
            <person name="Guss A.M."/>
            <person name="Hedderich R."/>
            <person name="Ingram-Smith C."/>
            <person name="Kuettner H.C."/>
            <person name="Krzycki J.A."/>
            <person name="Leigh J.A."/>
            <person name="Li W."/>
            <person name="Liu J."/>
            <person name="Mukhopadhyay B."/>
            <person name="Reeve J.N."/>
            <person name="Smith K."/>
            <person name="Springer T.A."/>
            <person name="Umayam L.A."/>
            <person name="White O."/>
            <person name="White R.H."/>
            <person name="de Macario E.C."/>
            <person name="Ferry J.G."/>
            <person name="Jarrell K.F."/>
            <person name="Jing H."/>
            <person name="Macario A.J.L."/>
            <person name="Paulsen I.T."/>
            <person name="Pritchett M."/>
            <person name="Sowers K.R."/>
            <person name="Swanson R.V."/>
            <person name="Zinder S.H."/>
            <person name="Lander E."/>
            <person name="Metcalf W.W."/>
            <person name="Birren B."/>
        </authorList>
    </citation>
    <scope>NUCLEOTIDE SEQUENCE [LARGE SCALE GENOMIC DNA]</scope>
    <source>
        <strain>ATCC 35395 / DSM 2834 / JCM 12185 / C2A</strain>
    </source>
</reference>
<gene>
    <name type="ordered locus">MA_1747</name>
</gene>
<accession>Q8TQ05</accession>
<sequence>MDPSKDTSPQVRLEKITYNYPYSDAAALSDVNLELKKGEFVLLAGPSGCGKSTLVRCLNRLVPEVSGGSFSGRVLLRGKDLTHEKVHSLALEVGMVFQNPETQLFSLTVAEDLAFGPENLGLPGEEIRIRVKKVLKEVGLKGLEDHFIFTLSGGEKQRTAIGGNLAMQPEILVLDEPTSDLDPAGTGEVLELLKHLNAENRTTLILIEHKLDAVFEMVDRMLVMDEGRVILDGKPFEILCREEEKLRKLGIHPPQFTEIARFLGFFSENSSIPAYETLLKRLTELLQASEVEIHPEDLEKRESEIPAPAPQPRNTPPHVLIEQLCYRHEDGSEAFEKLNLEIKRGEFLALLGHNGAGKTTLAGHLIGFYRPASGRILLDGKDISGYSTARLSKQVGYLFQNPDSQIFTNSVFEEVCFGLENLGMPEEKIKKLADSALEMMELSAYRNRHPHALSRGQRQRLAVASILALEPDLLILDEPTTGQDRGHIRKFLDKIRKLNGLGKTVILITHDMELAAEYAERVVVMKQGKIFLDGPTAEVFSSPEELGAAGLLPPLPARLALDLRKLGIDIPRLLTVSDLKSFLKARCPELSACRPTEIEKIVEENDSGEEVSLF</sequence>
<name>Y1747_METAC</name>
<evidence type="ECO:0000250" key="1"/>
<evidence type="ECO:0000255" key="2">
    <source>
        <dbReference type="PROSITE-ProRule" id="PRU00434"/>
    </source>
</evidence>
<evidence type="ECO:0000305" key="3"/>
<comment type="function">
    <text evidence="1">Probably part of an ABC transporter complex. Responsible for energy coupling to the transport system (By similarity).</text>
</comment>
<comment type="subcellular location">
    <subcellularLocation>
        <location evidence="1">Cell membrane</location>
        <topology evidence="1">Peripheral membrane protein</topology>
    </subcellularLocation>
</comment>
<comment type="similarity">
    <text evidence="3">Belongs to the ABC transporter superfamily.</text>
</comment>
<keyword id="KW-0067">ATP-binding</keyword>
<keyword id="KW-1003">Cell membrane</keyword>
<keyword id="KW-0472">Membrane</keyword>
<keyword id="KW-0547">Nucleotide-binding</keyword>
<keyword id="KW-1185">Reference proteome</keyword>
<keyword id="KW-0677">Repeat</keyword>
<keyword id="KW-1278">Translocase</keyword>
<keyword id="KW-0813">Transport</keyword>
<proteinExistence type="inferred from homology"/>
<protein>
    <recommendedName>
        <fullName>Putative ABC transporter ATP-binding protein MA_1747</fullName>
        <ecNumber>7.-.-.-</ecNumber>
    </recommendedName>
</protein>
<feature type="chain" id="PRO_0000092138" description="Putative ABC transporter ATP-binding protein MA_1747">
    <location>
        <begin position="1"/>
        <end position="614"/>
    </location>
</feature>
<feature type="domain" description="ABC transporter 1" evidence="2">
    <location>
        <begin position="11"/>
        <end position="251"/>
    </location>
</feature>
<feature type="domain" description="ABC transporter 2" evidence="2">
    <location>
        <begin position="319"/>
        <end position="552"/>
    </location>
</feature>
<feature type="binding site" evidence="2">
    <location>
        <begin position="45"/>
        <end position="52"/>
    </location>
    <ligand>
        <name>ATP</name>
        <dbReference type="ChEBI" id="CHEBI:30616"/>
        <label>1</label>
    </ligand>
</feature>
<feature type="binding site" evidence="2">
    <location>
        <begin position="352"/>
        <end position="359"/>
    </location>
    <ligand>
        <name>ATP</name>
        <dbReference type="ChEBI" id="CHEBI:30616"/>
        <label>2</label>
    </ligand>
</feature>